<evidence type="ECO:0000255" key="1">
    <source>
        <dbReference type="HAMAP-Rule" id="MF_00087"/>
    </source>
</evidence>
<dbReference type="EC" id="1.2.1.70" evidence="1"/>
<dbReference type="EMBL" id="CP000393">
    <property type="protein sequence ID" value="ABG50340.1"/>
    <property type="molecule type" value="Genomic_DNA"/>
</dbReference>
<dbReference type="RefSeq" id="WP_011610728.1">
    <property type="nucleotide sequence ID" value="NC_008312.1"/>
</dbReference>
<dbReference type="SMR" id="Q117I4"/>
<dbReference type="STRING" id="203124.Tery_0949"/>
<dbReference type="KEGG" id="ter:Tery_0949"/>
<dbReference type="eggNOG" id="COG0373">
    <property type="taxonomic scope" value="Bacteria"/>
</dbReference>
<dbReference type="HOGENOM" id="CLU_035113_2_1_3"/>
<dbReference type="OrthoDB" id="110209at2"/>
<dbReference type="UniPathway" id="UPA00251">
    <property type="reaction ID" value="UER00316"/>
</dbReference>
<dbReference type="UniPathway" id="UPA00668"/>
<dbReference type="GO" id="GO:0008883">
    <property type="term" value="F:glutamyl-tRNA reductase activity"/>
    <property type="evidence" value="ECO:0007669"/>
    <property type="project" value="UniProtKB-UniRule"/>
</dbReference>
<dbReference type="GO" id="GO:0050661">
    <property type="term" value="F:NADP binding"/>
    <property type="evidence" value="ECO:0007669"/>
    <property type="project" value="InterPro"/>
</dbReference>
<dbReference type="GO" id="GO:0015995">
    <property type="term" value="P:chlorophyll biosynthetic process"/>
    <property type="evidence" value="ECO:0007669"/>
    <property type="project" value="UniProtKB-UniPathway"/>
</dbReference>
<dbReference type="GO" id="GO:0006782">
    <property type="term" value="P:protoporphyrinogen IX biosynthetic process"/>
    <property type="evidence" value="ECO:0007669"/>
    <property type="project" value="UniProtKB-UniRule"/>
</dbReference>
<dbReference type="CDD" id="cd05213">
    <property type="entry name" value="NAD_bind_Glutamyl_tRNA_reduct"/>
    <property type="match status" value="1"/>
</dbReference>
<dbReference type="FunFam" id="3.30.460.30:FF:000001">
    <property type="entry name" value="Glutamyl-tRNA reductase"/>
    <property type="match status" value="1"/>
</dbReference>
<dbReference type="FunFam" id="3.40.50.720:FF:000031">
    <property type="entry name" value="Glutamyl-tRNA reductase"/>
    <property type="match status" value="1"/>
</dbReference>
<dbReference type="Gene3D" id="3.30.460.30">
    <property type="entry name" value="Glutamyl-tRNA reductase, N-terminal domain"/>
    <property type="match status" value="1"/>
</dbReference>
<dbReference type="Gene3D" id="3.40.50.720">
    <property type="entry name" value="NAD(P)-binding Rossmann-like Domain"/>
    <property type="match status" value="1"/>
</dbReference>
<dbReference type="HAMAP" id="MF_00087">
    <property type="entry name" value="Glu_tRNA_reductase"/>
    <property type="match status" value="1"/>
</dbReference>
<dbReference type="InterPro" id="IPR000343">
    <property type="entry name" value="4pyrrol_synth_GluRdtase"/>
</dbReference>
<dbReference type="InterPro" id="IPR015896">
    <property type="entry name" value="4pyrrol_synth_GluRdtase_dimer"/>
</dbReference>
<dbReference type="InterPro" id="IPR015895">
    <property type="entry name" value="4pyrrol_synth_GluRdtase_N"/>
</dbReference>
<dbReference type="InterPro" id="IPR018214">
    <property type="entry name" value="GluRdtase_CS"/>
</dbReference>
<dbReference type="InterPro" id="IPR036453">
    <property type="entry name" value="GluRdtase_dimer_dom_sf"/>
</dbReference>
<dbReference type="InterPro" id="IPR036343">
    <property type="entry name" value="GluRdtase_N_sf"/>
</dbReference>
<dbReference type="InterPro" id="IPR036291">
    <property type="entry name" value="NAD(P)-bd_dom_sf"/>
</dbReference>
<dbReference type="InterPro" id="IPR006151">
    <property type="entry name" value="Shikm_DH/Glu-tRNA_Rdtase"/>
</dbReference>
<dbReference type="NCBIfam" id="TIGR01035">
    <property type="entry name" value="hemA"/>
    <property type="match status" value="1"/>
</dbReference>
<dbReference type="NCBIfam" id="NF000744">
    <property type="entry name" value="PRK00045.1-3"/>
    <property type="match status" value="1"/>
</dbReference>
<dbReference type="PANTHER" id="PTHR43120">
    <property type="entry name" value="GLUTAMYL-TRNA REDUCTASE 1, CHLOROPLASTIC"/>
    <property type="match status" value="1"/>
</dbReference>
<dbReference type="PANTHER" id="PTHR43120:SF1">
    <property type="entry name" value="GLUTAMYL-TRNA REDUCTASE 1, CHLOROPLASTIC"/>
    <property type="match status" value="1"/>
</dbReference>
<dbReference type="Pfam" id="PF00745">
    <property type="entry name" value="GlutR_dimer"/>
    <property type="match status" value="1"/>
</dbReference>
<dbReference type="Pfam" id="PF05201">
    <property type="entry name" value="GlutR_N"/>
    <property type="match status" value="1"/>
</dbReference>
<dbReference type="Pfam" id="PF01488">
    <property type="entry name" value="Shikimate_DH"/>
    <property type="match status" value="1"/>
</dbReference>
<dbReference type="PIRSF" id="PIRSF000445">
    <property type="entry name" value="4pyrrol_synth_GluRdtase"/>
    <property type="match status" value="1"/>
</dbReference>
<dbReference type="SUPFAM" id="SSF69742">
    <property type="entry name" value="Glutamyl tRNA-reductase catalytic, N-terminal domain"/>
    <property type="match status" value="1"/>
</dbReference>
<dbReference type="SUPFAM" id="SSF69075">
    <property type="entry name" value="Glutamyl tRNA-reductase dimerization domain"/>
    <property type="match status" value="1"/>
</dbReference>
<dbReference type="SUPFAM" id="SSF51735">
    <property type="entry name" value="NAD(P)-binding Rossmann-fold domains"/>
    <property type="match status" value="1"/>
</dbReference>
<dbReference type="PROSITE" id="PS00747">
    <property type="entry name" value="GLUTR"/>
    <property type="match status" value="1"/>
</dbReference>
<protein>
    <recommendedName>
        <fullName evidence="1">Glutamyl-tRNA reductase</fullName>
        <shortName evidence="1">GluTR</shortName>
        <ecNumber evidence="1">1.2.1.70</ecNumber>
    </recommendedName>
</protein>
<accession>Q117I4</accession>
<proteinExistence type="inferred from homology"/>
<sequence length="431" mass="47969">MNIAVIGLSHKTAPVEVREKLSLPETEIQNAISELCSGTYTQEVGILSTCNRLEIYVVTNEMQPGIREVTQFLSESSKIPLNQLRPHLFMLLHEDSIMHLMRVASGLDSLVLGEGQILAQVKQTHKLGQKYKGIGRILNRLFKQAVTAGKRVRTETSIGTGAVSVSSAAVELAQMKLEDLSNYQVAIVGAGKMSKLLVQHLLAKGANKISIINRSVGRAQDLANSFKDANIKVYSMLEMVQVIGESDLVFTSTAATELILDKAKLETILDPLKPLMLVDISVPRNIGNDVSELPNVRCFNVDDLKAVVAQNRESRRQMAMEAEVLLEEEVEAFDVWWKSLETVPTINSLRQKIETIREQELEKALSRLGSEFAEKHQEVIEALTRGIVNKILHDPMVQLRAQQDIEARRHAMETLQLLFNLESEMSSGKVI</sequence>
<gene>
    <name evidence="1" type="primary">hemA</name>
    <name type="ordered locus">Tery_0949</name>
</gene>
<name>HEM1_TRIEI</name>
<comment type="function">
    <text evidence="1">Catalyzes the NADPH-dependent reduction of glutamyl-tRNA(Glu) to glutamate 1-semialdehyde (GSA).</text>
</comment>
<comment type="catalytic activity">
    <reaction evidence="1">
        <text>(S)-4-amino-5-oxopentanoate + tRNA(Glu) + NADP(+) = L-glutamyl-tRNA(Glu) + NADPH + H(+)</text>
        <dbReference type="Rhea" id="RHEA:12344"/>
        <dbReference type="Rhea" id="RHEA-COMP:9663"/>
        <dbReference type="Rhea" id="RHEA-COMP:9680"/>
        <dbReference type="ChEBI" id="CHEBI:15378"/>
        <dbReference type="ChEBI" id="CHEBI:57501"/>
        <dbReference type="ChEBI" id="CHEBI:57783"/>
        <dbReference type="ChEBI" id="CHEBI:58349"/>
        <dbReference type="ChEBI" id="CHEBI:78442"/>
        <dbReference type="ChEBI" id="CHEBI:78520"/>
        <dbReference type="EC" id="1.2.1.70"/>
    </reaction>
</comment>
<comment type="pathway">
    <text evidence="1">Porphyrin-containing compound metabolism; protoporphyrin-IX biosynthesis; 5-aminolevulinate from L-glutamyl-tRNA(Glu): step 1/2.</text>
</comment>
<comment type="pathway">
    <text evidence="1">Porphyrin-containing compound metabolism; chlorophyll biosynthesis.</text>
</comment>
<comment type="subunit">
    <text evidence="1">Homodimer.</text>
</comment>
<comment type="domain">
    <text evidence="1">Possesses an unusual extended V-shaped dimeric structure with each monomer consisting of three distinct domains arranged along a curved 'spinal' alpha-helix. The N-terminal catalytic domain specifically recognizes the glutamate moiety of the substrate. The second domain is the NADPH-binding domain, and the third C-terminal domain is responsible for dimerization.</text>
</comment>
<comment type="miscellaneous">
    <text evidence="1">During catalysis, the active site Cys acts as a nucleophile attacking the alpha-carbonyl group of tRNA-bound glutamate with the formation of a thioester intermediate between enzyme and glutamate, and the concomitant release of tRNA(Glu). The thioester intermediate is finally reduced by direct hydride transfer from NADPH, to form the product GSA.</text>
</comment>
<comment type="similarity">
    <text evidence="1">Belongs to the glutamyl-tRNA reductase family.</text>
</comment>
<feature type="chain" id="PRO_1000004719" description="Glutamyl-tRNA reductase">
    <location>
        <begin position="1"/>
        <end position="431"/>
    </location>
</feature>
<feature type="active site" description="Nucleophile" evidence="1">
    <location>
        <position position="50"/>
    </location>
</feature>
<feature type="binding site" evidence="1">
    <location>
        <begin position="49"/>
        <end position="52"/>
    </location>
    <ligand>
        <name>substrate</name>
    </ligand>
</feature>
<feature type="binding site" evidence="1">
    <location>
        <position position="109"/>
    </location>
    <ligand>
        <name>substrate</name>
    </ligand>
</feature>
<feature type="binding site" evidence="1">
    <location>
        <begin position="114"/>
        <end position="116"/>
    </location>
    <ligand>
        <name>substrate</name>
    </ligand>
</feature>
<feature type="binding site" evidence="1">
    <location>
        <position position="120"/>
    </location>
    <ligand>
        <name>substrate</name>
    </ligand>
</feature>
<feature type="binding site" evidence="1">
    <location>
        <begin position="189"/>
        <end position="194"/>
    </location>
    <ligand>
        <name>NADP(+)</name>
        <dbReference type="ChEBI" id="CHEBI:58349"/>
    </ligand>
</feature>
<feature type="site" description="Important for activity" evidence="1">
    <location>
        <position position="99"/>
    </location>
</feature>
<reference key="1">
    <citation type="journal article" date="2015" name="Proc. Natl. Acad. Sci. U.S.A.">
        <title>Trichodesmium genome maintains abundant, widespread noncoding DNA in situ, despite oligotrophic lifestyle.</title>
        <authorList>
            <person name="Walworth N."/>
            <person name="Pfreundt U."/>
            <person name="Nelson W.C."/>
            <person name="Mincer T."/>
            <person name="Heidelberg J.F."/>
            <person name="Fu F."/>
            <person name="Waterbury J.B."/>
            <person name="Glavina del Rio T."/>
            <person name="Goodwin L."/>
            <person name="Kyrpides N.C."/>
            <person name="Land M.L."/>
            <person name="Woyke T."/>
            <person name="Hutchins D.A."/>
            <person name="Hess W.R."/>
            <person name="Webb E.A."/>
        </authorList>
    </citation>
    <scope>NUCLEOTIDE SEQUENCE [LARGE SCALE GENOMIC DNA]</scope>
    <source>
        <strain>IMS101</strain>
    </source>
</reference>
<keyword id="KW-0149">Chlorophyll biosynthesis</keyword>
<keyword id="KW-0521">NADP</keyword>
<keyword id="KW-0560">Oxidoreductase</keyword>
<keyword id="KW-0627">Porphyrin biosynthesis</keyword>
<organism>
    <name type="scientific">Trichodesmium erythraeum (strain IMS101)</name>
    <dbReference type="NCBI Taxonomy" id="203124"/>
    <lineage>
        <taxon>Bacteria</taxon>
        <taxon>Bacillati</taxon>
        <taxon>Cyanobacteriota</taxon>
        <taxon>Cyanophyceae</taxon>
        <taxon>Oscillatoriophycideae</taxon>
        <taxon>Oscillatoriales</taxon>
        <taxon>Microcoleaceae</taxon>
        <taxon>Trichodesmium</taxon>
    </lineage>
</organism>